<accession>P39091</accession>
<evidence type="ECO:0000255" key="1"/>
<evidence type="ECO:0000269" key="2">
    <source>
    </source>
</evidence>
<reference key="1">
    <citation type="journal article" date="1988" name="Comp. Biochem. Physiol.">
        <title>The homology between the serum proteins PO2 in pig, Xk in horse and alpha 1B-glycoprotein in human.</title>
        <authorList>
            <person name="van de Weghe A."/>
            <person name="Coppieters W."/>
            <person name="Bauw G."/>
            <person name="Vandekerckhove J."/>
            <person name="Bouquet Y."/>
        </authorList>
    </citation>
    <scope>PROTEIN SEQUENCE</scope>
    <source>
        <tissue>Plasma</tissue>
    </source>
</reference>
<reference key="2">
    <citation type="journal article" date="2010" name="Biochim. Biophys. Acta">
        <title>Human CRISP-3 binds serum alpha1B-glycoprotein across species.</title>
        <authorList>
            <person name="Udby L."/>
            <person name="Johnsen A.H."/>
            <person name="Borregaard N."/>
        </authorList>
    </citation>
    <scope>PROTEIN SEQUENCE OF 1-15</scope>
    <scope>INTERACTION WITH CRISP3</scope>
    <scope>GLYCOSYLATION</scope>
    <source>
        <tissue>Serum</tissue>
    </source>
</reference>
<feature type="chain" id="PRO_0000072664" description="Alpha-1B-glycoprotein">
    <location>
        <begin position="1"/>
        <end position="41" status="greater than"/>
    </location>
</feature>
<feature type="glycosylation site" description="N-linked (GlcNAc...) asparagine" evidence="1">
    <location>
        <position position="23"/>
    </location>
</feature>
<feature type="sequence variant">
    <original>W</original>
    <variation>L</variation>
    <location>
        <position position="11"/>
    </location>
</feature>
<feature type="sequence variant">
    <original>Q</original>
    <variation>V</variation>
    <location>
        <position position="26"/>
    </location>
</feature>
<feature type="sequence variant">
    <original>G</original>
    <variation>E</variation>
    <location>
        <position position="37"/>
    </location>
</feature>
<feature type="non-terminal residue">
    <location>
        <position position="41"/>
    </location>
</feature>
<sequence>AVVFDPPPALWAEADXQQEPLRNLTQTVGQYLPTLSGXLAE</sequence>
<comment type="subunit">
    <text evidence="2">Interacts with CRISP3.</text>
</comment>
<comment type="subcellular location">
    <subcellularLocation>
        <location>Secreted</location>
    </subcellularLocation>
</comment>
<comment type="tissue specificity">
    <text>Plasma.</text>
</comment>
<comment type="PTM">
    <text evidence="2">Glycosylated.</text>
</comment>
<proteinExistence type="evidence at protein level"/>
<name>A1BG_HORSE</name>
<gene>
    <name type="primary">A1BG</name>
</gene>
<keyword id="KW-0903">Direct protein sequencing</keyword>
<keyword id="KW-0325">Glycoprotein</keyword>
<keyword id="KW-0393">Immunoglobulin domain</keyword>
<keyword id="KW-1185">Reference proteome</keyword>
<keyword id="KW-0964">Secreted</keyword>
<organism>
    <name type="scientific">Equus caballus</name>
    <name type="common">Horse</name>
    <dbReference type="NCBI Taxonomy" id="9796"/>
    <lineage>
        <taxon>Eukaryota</taxon>
        <taxon>Metazoa</taxon>
        <taxon>Chordata</taxon>
        <taxon>Craniata</taxon>
        <taxon>Vertebrata</taxon>
        <taxon>Euteleostomi</taxon>
        <taxon>Mammalia</taxon>
        <taxon>Eutheria</taxon>
        <taxon>Laurasiatheria</taxon>
        <taxon>Perissodactyla</taxon>
        <taxon>Equidae</taxon>
        <taxon>Equus</taxon>
    </lineage>
</organism>
<protein>
    <recommendedName>
        <fullName>Alpha-1B-glycoprotein</fullName>
    </recommendedName>
    <alternativeName>
        <fullName>Alpha-1-B glycoprotein</fullName>
    </alternativeName>
    <alternativeName>
        <fullName>Plasma protein XK</fullName>
    </alternativeName>
</protein>
<dbReference type="PIR" id="PL0028">
    <property type="entry name" value="PL0028"/>
</dbReference>
<dbReference type="GlyCosmos" id="P39091">
    <property type="glycosylation" value="1 site, No reported glycans"/>
</dbReference>
<dbReference type="InParanoid" id="P39091"/>
<dbReference type="Proteomes" id="UP000002281">
    <property type="component" value="Unplaced"/>
</dbReference>
<dbReference type="GO" id="GO:0005576">
    <property type="term" value="C:extracellular region"/>
    <property type="evidence" value="ECO:0007669"/>
    <property type="project" value="UniProtKB-SubCell"/>
</dbReference>